<keyword id="KW-0963">Cytoplasm</keyword>
<keyword id="KW-0704">Schiff base</keyword>
<keyword id="KW-0784">Thiamine biosynthesis</keyword>
<keyword id="KW-0808">Transferase</keyword>
<sequence>MLKIGPYEFQSRLLLGTGKYPDLEVQKQAVEVSGAEILTFAVRRMNIFEPNQPNFLENLDLTKYKLLPNTAGAKTAEEAVRIARLAKASGLCDMIKVEVIGCEKTLLPDPVETLKATEILLEEGFIVLPYTSDDVVLAKRLQELGCHAVMPGASPIGSGQGIVNPLNLSLIIEQATVPVIVDAGIGSPADAAFAMELGADGVLLNTAVSGAADPVKMAKAMKLAVEAGRLGYEAGRIPKKRYATASSPMEGMSVV</sequence>
<comment type="function">
    <text evidence="1">Catalyzes the rearrangement of 1-deoxy-D-xylulose 5-phosphate (DXP) to produce the thiazole phosphate moiety of thiamine. Sulfur is provided by the thiocarboxylate moiety of the carrier protein ThiS. In vitro, sulfur can be provided by H(2)S.</text>
</comment>
<comment type="catalytic activity">
    <reaction evidence="1">
        <text>[ThiS sulfur-carrier protein]-C-terminal-Gly-aminoethanethioate + 2-iminoacetate + 1-deoxy-D-xylulose 5-phosphate = [ThiS sulfur-carrier protein]-C-terminal Gly-Gly + 2-[(2R,5Z)-2-carboxy-4-methylthiazol-5(2H)-ylidene]ethyl phosphate + 2 H2O + H(+)</text>
        <dbReference type="Rhea" id="RHEA:26297"/>
        <dbReference type="Rhea" id="RHEA-COMP:12909"/>
        <dbReference type="Rhea" id="RHEA-COMP:19908"/>
        <dbReference type="ChEBI" id="CHEBI:15377"/>
        <dbReference type="ChEBI" id="CHEBI:15378"/>
        <dbReference type="ChEBI" id="CHEBI:57792"/>
        <dbReference type="ChEBI" id="CHEBI:62899"/>
        <dbReference type="ChEBI" id="CHEBI:77846"/>
        <dbReference type="ChEBI" id="CHEBI:90778"/>
        <dbReference type="ChEBI" id="CHEBI:232372"/>
        <dbReference type="EC" id="2.8.1.10"/>
    </reaction>
</comment>
<comment type="pathway">
    <text evidence="1">Cofactor biosynthesis; thiamine diphosphate biosynthesis.</text>
</comment>
<comment type="subunit">
    <text evidence="1">Homotetramer. Forms heterodimers with either ThiH or ThiS.</text>
</comment>
<comment type="subcellular location">
    <subcellularLocation>
        <location evidence="1">Cytoplasm</location>
    </subcellularLocation>
</comment>
<comment type="similarity">
    <text evidence="1">Belongs to the ThiG family.</text>
</comment>
<evidence type="ECO:0000255" key="1">
    <source>
        <dbReference type="HAMAP-Rule" id="MF_00443"/>
    </source>
</evidence>
<accession>C5D6J1</accession>
<dbReference type="EC" id="2.8.1.10" evidence="1"/>
<dbReference type="EMBL" id="CP001638">
    <property type="protein sequence ID" value="ACS23508.1"/>
    <property type="molecule type" value="Genomic_DNA"/>
</dbReference>
<dbReference type="SMR" id="C5D6J1"/>
<dbReference type="STRING" id="471223.GWCH70_0613"/>
<dbReference type="KEGG" id="gwc:GWCH70_0613"/>
<dbReference type="eggNOG" id="COG2022">
    <property type="taxonomic scope" value="Bacteria"/>
</dbReference>
<dbReference type="HOGENOM" id="CLU_062233_1_0_9"/>
<dbReference type="OrthoDB" id="9805935at2"/>
<dbReference type="UniPathway" id="UPA00060"/>
<dbReference type="GO" id="GO:0005737">
    <property type="term" value="C:cytoplasm"/>
    <property type="evidence" value="ECO:0007669"/>
    <property type="project" value="UniProtKB-SubCell"/>
</dbReference>
<dbReference type="GO" id="GO:1990107">
    <property type="term" value="F:thiazole synthase activity"/>
    <property type="evidence" value="ECO:0007669"/>
    <property type="project" value="UniProtKB-EC"/>
</dbReference>
<dbReference type="GO" id="GO:0009229">
    <property type="term" value="P:thiamine diphosphate biosynthetic process"/>
    <property type="evidence" value="ECO:0007669"/>
    <property type="project" value="UniProtKB-UniRule"/>
</dbReference>
<dbReference type="CDD" id="cd04728">
    <property type="entry name" value="ThiG"/>
    <property type="match status" value="1"/>
</dbReference>
<dbReference type="FunFam" id="3.20.20.70:FF:000049">
    <property type="entry name" value="Thiazole synthase"/>
    <property type="match status" value="1"/>
</dbReference>
<dbReference type="Gene3D" id="3.20.20.70">
    <property type="entry name" value="Aldolase class I"/>
    <property type="match status" value="1"/>
</dbReference>
<dbReference type="HAMAP" id="MF_00443">
    <property type="entry name" value="ThiG"/>
    <property type="match status" value="1"/>
</dbReference>
<dbReference type="InterPro" id="IPR013785">
    <property type="entry name" value="Aldolase_TIM"/>
</dbReference>
<dbReference type="InterPro" id="IPR033983">
    <property type="entry name" value="Thiazole_synthase_ThiG"/>
</dbReference>
<dbReference type="InterPro" id="IPR008867">
    <property type="entry name" value="ThiG"/>
</dbReference>
<dbReference type="PANTHER" id="PTHR34266">
    <property type="entry name" value="THIAZOLE SYNTHASE"/>
    <property type="match status" value="1"/>
</dbReference>
<dbReference type="PANTHER" id="PTHR34266:SF2">
    <property type="entry name" value="THIAZOLE SYNTHASE"/>
    <property type="match status" value="1"/>
</dbReference>
<dbReference type="Pfam" id="PF05690">
    <property type="entry name" value="ThiG"/>
    <property type="match status" value="1"/>
</dbReference>
<dbReference type="SUPFAM" id="SSF110399">
    <property type="entry name" value="ThiG-like"/>
    <property type="match status" value="1"/>
</dbReference>
<reference key="1">
    <citation type="submission" date="2009-06" db="EMBL/GenBank/DDBJ databases">
        <title>Complete sequence of chromosome of Geopacillus sp. WCH70.</title>
        <authorList>
            <consortium name="US DOE Joint Genome Institute"/>
            <person name="Lucas S."/>
            <person name="Copeland A."/>
            <person name="Lapidus A."/>
            <person name="Glavina del Rio T."/>
            <person name="Dalin E."/>
            <person name="Tice H."/>
            <person name="Bruce D."/>
            <person name="Goodwin L."/>
            <person name="Pitluck S."/>
            <person name="Chertkov O."/>
            <person name="Brettin T."/>
            <person name="Detter J.C."/>
            <person name="Han C."/>
            <person name="Larimer F."/>
            <person name="Land M."/>
            <person name="Hauser L."/>
            <person name="Kyrpides N."/>
            <person name="Mikhailova N."/>
            <person name="Brumm P."/>
            <person name="Mead D.A."/>
            <person name="Richardson P."/>
        </authorList>
    </citation>
    <scope>NUCLEOTIDE SEQUENCE [LARGE SCALE GENOMIC DNA]</scope>
    <source>
        <strain>WCH70</strain>
    </source>
</reference>
<proteinExistence type="inferred from homology"/>
<name>THIG_GEOSW</name>
<organism>
    <name type="scientific">Geobacillus sp. (strain WCH70)</name>
    <dbReference type="NCBI Taxonomy" id="471223"/>
    <lineage>
        <taxon>Bacteria</taxon>
        <taxon>Bacillati</taxon>
        <taxon>Bacillota</taxon>
        <taxon>Bacilli</taxon>
        <taxon>Bacillales</taxon>
        <taxon>Anoxybacillaceae</taxon>
        <taxon>Geobacillus</taxon>
    </lineage>
</organism>
<gene>
    <name evidence="1" type="primary">thiG</name>
    <name type="ordered locus">GWCH70_0613</name>
</gene>
<protein>
    <recommendedName>
        <fullName evidence="1">Thiazole synthase</fullName>
        <ecNumber evidence="1">2.8.1.10</ecNumber>
    </recommendedName>
</protein>
<feature type="chain" id="PRO_1000206134" description="Thiazole synthase">
    <location>
        <begin position="1"/>
        <end position="255"/>
    </location>
</feature>
<feature type="active site" description="Schiff-base intermediate with DXP" evidence="1">
    <location>
        <position position="96"/>
    </location>
</feature>
<feature type="binding site" evidence="1">
    <location>
        <position position="157"/>
    </location>
    <ligand>
        <name>1-deoxy-D-xylulose 5-phosphate</name>
        <dbReference type="ChEBI" id="CHEBI:57792"/>
    </ligand>
</feature>
<feature type="binding site" evidence="1">
    <location>
        <begin position="183"/>
        <end position="184"/>
    </location>
    <ligand>
        <name>1-deoxy-D-xylulose 5-phosphate</name>
        <dbReference type="ChEBI" id="CHEBI:57792"/>
    </ligand>
</feature>
<feature type="binding site" evidence="1">
    <location>
        <begin position="205"/>
        <end position="206"/>
    </location>
    <ligand>
        <name>1-deoxy-D-xylulose 5-phosphate</name>
        <dbReference type="ChEBI" id="CHEBI:57792"/>
    </ligand>
</feature>